<name>VEL_LACBS</name>
<reference key="1">
    <citation type="journal article" date="2008" name="Nature">
        <title>The genome of Laccaria bicolor provides insights into mycorrhizal symbiosis.</title>
        <authorList>
            <person name="Martin F."/>
            <person name="Aerts A."/>
            <person name="Ahren D."/>
            <person name="Brun A."/>
            <person name="Danchin E.G.J."/>
            <person name="Duchaussoy F."/>
            <person name="Gibon J."/>
            <person name="Kohler A."/>
            <person name="Lindquist E."/>
            <person name="Pereda V."/>
            <person name="Salamov A."/>
            <person name="Shapiro H.J."/>
            <person name="Wuyts J."/>
            <person name="Blaudez D."/>
            <person name="Buee M."/>
            <person name="Brokstein P."/>
            <person name="Canbaeck B."/>
            <person name="Cohen D."/>
            <person name="Courty P.E."/>
            <person name="Coutinho P.M."/>
            <person name="Delaruelle C."/>
            <person name="Detter J.C."/>
            <person name="Deveau A."/>
            <person name="DiFazio S."/>
            <person name="Duplessis S."/>
            <person name="Fraissinet-Tachet L."/>
            <person name="Lucic E."/>
            <person name="Frey-Klett P."/>
            <person name="Fourrey C."/>
            <person name="Feussner I."/>
            <person name="Gay G."/>
            <person name="Grimwood J."/>
            <person name="Hoegger P.J."/>
            <person name="Jain P."/>
            <person name="Kilaru S."/>
            <person name="Labbe J."/>
            <person name="Lin Y.C."/>
            <person name="Legue V."/>
            <person name="Le Tacon F."/>
            <person name="Marmeisse R."/>
            <person name="Melayah D."/>
            <person name="Montanini B."/>
            <person name="Muratet M."/>
            <person name="Nehls U."/>
            <person name="Niculita-Hirzel H."/>
            <person name="Oudot-Le Secq M.P."/>
            <person name="Peter M."/>
            <person name="Quesneville H."/>
            <person name="Rajashekar B."/>
            <person name="Reich M."/>
            <person name="Rouhier N."/>
            <person name="Schmutz J."/>
            <person name="Yin T."/>
            <person name="Chalot M."/>
            <person name="Henrissat B."/>
            <person name="Kuees U."/>
            <person name="Lucas S."/>
            <person name="Van de Peer Y."/>
            <person name="Podila G.K."/>
            <person name="Polle A."/>
            <person name="Pukkila P.J."/>
            <person name="Richardson P.M."/>
            <person name="Rouze P."/>
            <person name="Sanders I.R."/>
            <person name="Stajich J.E."/>
            <person name="Tunlid A."/>
            <person name="Tuskan G."/>
            <person name="Grigoriev I.V."/>
        </authorList>
    </citation>
    <scope>NUCLEOTIDE SEQUENCE [LARGE SCALE GENOMIC DNA]</scope>
    <source>
        <strain>S238N-H82 / ATCC MYA-4686</strain>
    </source>
</reference>
<reference key="2">
    <citation type="journal article" date="2014" name="BMC Genomics">
        <title>Comparative transcriptomics of the model mushroom Coprinopsis cinerea reveals tissue-specific armories and a conserved circuitry for sexual development.</title>
        <authorList>
            <person name="Plaza D.F."/>
            <person name="Lin C.W."/>
            <person name="van der Velden N.S."/>
            <person name="Aebi M."/>
            <person name="Kuenzler M."/>
        </authorList>
    </citation>
    <scope>INDUCTION</scope>
</reference>
<accession>B0D4E7</accession>
<keyword id="KW-0539">Nucleus</keyword>
<keyword id="KW-1185">Reference proteome</keyword>
<keyword id="KW-0749">Sporulation</keyword>
<keyword id="KW-0804">Transcription</keyword>
<keyword id="KW-0805">Transcription regulation</keyword>
<evidence type="ECO:0000255" key="1">
    <source>
        <dbReference type="PROSITE-ProRule" id="PRU01165"/>
    </source>
</evidence>
<evidence type="ECO:0000256" key="2">
    <source>
        <dbReference type="SAM" id="MobiDB-lite"/>
    </source>
</evidence>
<evidence type="ECO:0000269" key="3">
    <source>
    </source>
</evidence>
<evidence type="ECO:0000305" key="4"/>
<evidence type="ECO:0000305" key="5">
    <source>
    </source>
</evidence>
<dbReference type="EMBL" id="DS547097">
    <property type="protein sequence ID" value="EDR10330.1"/>
    <property type="molecule type" value="Genomic_DNA"/>
</dbReference>
<dbReference type="RefSeq" id="XP_001878780.1">
    <property type="nucleotide sequence ID" value="XM_001878745.1"/>
</dbReference>
<dbReference type="SMR" id="B0D4E7"/>
<dbReference type="GeneID" id="6074656"/>
<dbReference type="KEGG" id="lbc:LACBIDRAFT_317102"/>
<dbReference type="HOGENOM" id="CLU_044751_0_0_1"/>
<dbReference type="InParanoid" id="B0D4E7"/>
<dbReference type="OrthoDB" id="5599552at2759"/>
<dbReference type="Proteomes" id="UP000001194">
    <property type="component" value="Unassembled WGS sequence"/>
</dbReference>
<dbReference type="GO" id="GO:0005634">
    <property type="term" value="C:nucleus"/>
    <property type="evidence" value="ECO:0007669"/>
    <property type="project" value="UniProtKB-SubCell"/>
</dbReference>
<dbReference type="GO" id="GO:0030435">
    <property type="term" value="P:sporulation resulting in formation of a cellular spore"/>
    <property type="evidence" value="ECO:0007669"/>
    <property type="project" value="UniProtKB-KW"/>
</dbReference>
<dbReference type="Gene3D" id="2.60.40.3960">
    <property type="entry name" value="Velvet domain"/>
    <property type="match status" value="1"/>
</dbReference>
<dbReference type="InterPro" id="IPR021740">
    <property type="entry name" value="Velvet"/>
</dbReference>
<dbReference type="InterPro" id="IPR037525">
    <property type="entry name" value="Velvet_dom"/>
</dbReference>
<dbReference type="InterPro" id="IPR038491">
    <property type="entry name" value="Velvet_dom_sf"/>
</dbReference>
<dbReference type="PANTHER" id="PTHR33572">
    <property type="entry name" value="SPORE DEVELOPMENT REGULATOR VOSA"/>
    <property type="match status" value="1"/>
</dbReference>
<dbReference type="PANTHER" id="PTHR33572:SF3">
    <property type="entry name" value="VELVET COMPLEX SUBUNIT B"/>
    <property type="match status" value="1"/>
</dbReference>
<dbReference type="Pfam" id="PF11754">
    <property type="entry name" value="Velvet"/>
    <property type="match status" value="1"/>
</dbReference>
<dbReference type="PROSITE" id="PS51821">
    <property type="entry name" value="VELVET"/>
    <property type="match status" value="1"/>
</dbReference>
<protein>
    <recommendedName>
        <fullName evidence="4">Probable velvet family sexual development regulator LACBIDRAFT_317102</fullName>
    </recommendedName>
</protein>
<comment type="function">
    <text evidence="5">Velvet-domain-containing protein that probably acts as a positive regulator of sexual development.</text>
</comment>
<comment type="subcellular location">
    <subcellularLocation>
        <location evidence="4">Nucleus</location>
    </subcellularLocation>
</comment>
<comment type="induction">
    <text evidence="3">Expression is up-regulated during fruiting body formation (PubMed:24942908).</text>
</comment>
<comment type="similarity">
    <text evidence="4">Belongs to the velvet family.</text>
</comment>
<proteinExistence type="evidence at transcript level"/>
<organism>
    <name type="scientific">Laccaria bicolor (strain S238N-H82 / ATCC MYA-4686)</name>
    <name type="common">Bicoloured deceiver</name>
    <name type="synonym">Laccaria laccata var. bicolor</name>
    <dbReference type="NCBI Taxonomy" id="486041"/>
    <lineage>
        <taxon>Eukaryota</taxon>
        <taxon>Fungi</taxon>
        <taxon>Dikarya</taxon>
        <taxon>Basidiomycota</taxon>
        <taxon>Agaricomycotina</taxon>
        <taxon>Agaricomycetes</taxon>
        <taxon>Agaricomycetidae</taxon>
        <taxon>Agaricales</taxon>
        <taxon>Agaricineae</taxon>
        <taxon>Hydnangiaceae</taxon>
        <taxon>Laccaria</taxon>
    </lineage>
</organism>
<sequence>MFTTHPQGRSYRSSVPHHHLRQPEIQNSYDQHANNPPRQTRRRPLADMIGHPIHFLTGQFAGQTIRAELDEIQKADLGRKYARVDRRPLDPPPVVRLRYFDIREDDVDQERGTEIKNYDEIQTIGLMSTVDLFPVPNESWTSRSPTQTSFSSSSPTLSNGNENFMFSSPQTSSPTAAQSQASTPNSPSSNDIIHYVGNHAITESSKVTSSLVGATFVQPAIVDYEGKKTIIFVFSDLAVKIEGTFLLRYRVFDIYSRPRDREDLLVQAECYGGPFRVYSTKEFPGLQASTDLTKHLARWGVRLNIRETERKRRKKGEIGSPLDDPKSKRKRTSLGSEDDEASDED</sequence>
<feature type="chain" id="PRO_0000435923" description="Probable velvet family sexual development regulator LACBIDRAFT_317102">
    <location>
        <begin position="1"/>
        <end position="345"/>
    </location>
</feature>
<feature type="domain" description="Velvet" evidence="1">
    <location>
        <begin position="62"/>
        <end position="306"/>
    </location>
</feature>
<feature type="region of interest" description="Disordered" evidence="2">
    <location>
        <begin position="1"/>
        <end position="43"/>
    </location>
</feature>
<feature type="region of interest" description="Disordered" evidence="2">
    <location>
        <begin position="138"/>
        <end position="189"/>
    </location>
</feature>
<feature type="region of interest" description="Disordered" evidence="2">
    <location>
        <begin position="310"/>
        <end position="345"/>
    </location>
</feature>
<feature type="compositionally biased region" description="Polar residues" evidence="2">
    <location>
        <begin position="1"/>
        <end position="13"/>
    </location>
</feature>
<feature type="compositionally biased region" description="Polar residues" evidence="2">
    <location>
        <begin position="24"/>
        <end position="38"/>
    </location>
</feature>
<feature type="compositionally biased region" description="Low complexity" evidence="2">
    <location>
        <begin position="141"/>
        <end position="158"/>
    </location>
</feature>
<feature type="compositionally biased region" description="Low complexity" evidence="2">
    <location>
        <begin position="167"/>
        <end position="184"/>
    </location>
</feature>
<feature type="compositionally biased region" description="Acidic residues" evidence="2">
    <location>
        <begin position="336"/>
        <end position="345"/>
    </location>
</feature>
<gene>
    <name type="ORF">LACBIDRAFT_317102</name>
</gene>